<gene>
    <name type="primary">TBX4</name>
</gene>
<reference key="1">
    <citation type="journal article" date="2000" name="Genomics">
        <title>Virtual cloning and physical mapping of a human T-box gene, TBX4.</title>
        <authorList>
            <person name="Yi C.H."/>
            <person name="Russ A."/>
            <person name="Brook J.D."/>
        </authorList>
    </citation>
    <scope>NUCLEOTIDE SEQUENCE [MRNA] (ISOFORM 1)</scope>
</reference>
<reference key="2">
    <citation type="journal article" date="2006" name="Nature">
        <title>DNA sequence of human chromosome 17 and analysis of rearrangement in the human lineage.</title>
        <authorList>
            <person name="Zody M.C."/>
            <person name="Garber M."/>
            <person name="Adams D.J."/>
            <person name="Sharpe T."/>
            <person name="Harrow J."/>
            <person name="Lupski J.R."/>
            <person name="Nicholson C."/>
            <person name="Searle S.M."/>
            <person name="Wilming L."/>
            <person name="Young S.K."/>
            <person name="Abouelleil A."/>
            <person name="Allen N.R."/>
            <person name="Bi W."/>
            <person name="Bloom T."/>
            <person name="Borowsky M.L."/>
            <person name="Bugalter B.E."/>
            <person name="Butler J."/>
            <person name="Chang J.L."/>
            <person name="Chen C.-K."/>
            <person name="Cook A."/>
            <person name="Corum B."/>
            <person name="Cuomo C.A."/>
            <person name="de Jong P.J."/>
            <person name="DeCaprio D."/>
            <person name="Dewar K."/>
            <person name="FitzGerald M."/>
            <person name="Gilbert J."/>
            <person name="Gibson R."/>
            <person name="Gnerre S."/>
            <person name="Goldstein S."/>
            <person name="Grafham D.V."/>
            <person name="Grocock R."/>
            <person name="Hafez N."/>
            <person name="Hagopian D.S."/>
            <person name="Hart E."/>
            <person name="Norman C.H."/>
            <person name="Humphray S."/>
            <person name="Jaffe D.B."/>
            <person name="Jones M."/>
            <person name="Kamal M."/>
            <person name="Khodiyar V.K."/>
            <person name="LaButti K."/>
            <person name="Laird G."/>
            <person name="Lehoczky J."/>
            <person name="Liu X."/>
            <person name="Lokyitsang T."/>
            <person name="Loveland J."/>
            <person name="Lui A."/>
            <person name="Macdonald P."/>
            <person name="Major J.E."/>
            <person name="Matthews L."/>
            <person name="Mauceli E."/>
            <person name="McCarroll S.A."/>
            <person name="Mihalev A.H."/>
            <person name="Mudge J."/>
            <person name="Nguyen C."/>
            <person name="Nicol R."/>
            <person name="O'Leary S.B."/>
            <person name="Osoegawa K."/>
            <person name="Schwartz D.C."/>
            <person name="Shaw-Smith C."/>
            <person name="Stankiewicz P."/>
            <person name="Steward C."/>
            <person name="Swarbreck D."/>
            <person name="Venkataraman V."/>
            <person name="Whittaker C.A."/>
            <person name="Yang X."/>
            <person name="Zimmer A.R."/>
            <person name="Bradley A."/>
            <person name="Hubbard T."/>
            <person name="Birren B.W."/>
            <person name="Rogers J."/>
            <person name="Lander E.S."/>
            <person name="Nusbaum C."/>
        </authorList>
    </citation>
    <scope>NUCLEOTIDE SEQUENCE [LARGE SCALE GENOMIC DNA]</scope>
</reference>
<reference key="3">
    <citation type="journal article" date="2004" name="Genome Res.">
        <title>The status, quality, and expansion of the NIH full-length cDNA project: the Mammalian Gene Collection (MGC).</title>
        <authorList>
            <consortium name="The MGC Project Team"/>
        </authorList>
    </citation>
    <scope>NUCLEOTIDE SEQUENCE [LARGE SCALE MRNA] (ISOFORMS 1 AND 2)</scope>
    <scope>VARIANT ALA-6</scope>
</reference>
<reference key="4">
    <citation type="journal article" date="2004" name="Am. J. Hum. Genet.">
        <title>Mutations in the human TBX4 gene cause small patella syndrome.</title>
        <authorList>
            <person name="Bongers E.M.H.F."/>
            <person name="Duijf P.H.G."/>
            <person name="van Beersum S.E.M."/>
            <person name="Schoots J."/>
            <person name="van Kampen A."/>
            <person name="Burckhardt A."/>
            <person name="Hamel B.C.J."/>
            <person name="Losan F."/>
            <person name="Hoefsloot L.H."/>
            <person name="Yntema H.G."/>
            <person name="Knoers N.V.A.M."/>
            <person name="van Bokhoven H."/>
        </authorList>
    </citation>
    <scope>VARIANTS ICPPS VAL-248 AND ARG-531</scope>
    <scope>VARIANTS ALA-6 AND VAL-35</scope>
</reference>
<reference key="5">
    <citation type="journal article" date="2013" name="Am. J. Med. Genet. A">
        <title>A novel SOX9 H169Q mutation in a family with overlapping phenotype of mild campomelic dysplasia and small patella syndrome.</title>
        <authorList>
            <person name="Matsushita M."/>
            <person name="Kitoh H."/>
            <person name="Kaneko H."/>
            <person name="Mishima K."/>
            <person name="Kadono I."/>
            <person name="Ishiguro N."/>
            <person name="Nishimura G."/>
        </authorList>
    </citation>
    <scope>VARIANT THR-282</scope>
</reference>
<reference key="6">
    <citation type="journal article" date="2019" name="Am. J. Hum. Genet.">
        <title>Homozygous null TBX4 mutations lead to posterior amelia with pelvic and pulmonary hypoplasia.</title>
        <authorList>
            <person name="Kariminejad A."/>
            <person name="Szenker-Ravi E."/>
            <person name="Lekszas C."/>
            <person name="Tajsharghi H."/>
            <person name="Moslemi A.R."/>
            <person name="Naert T."/>
            <person name="Tran H.T."/>
            <person name="Ahangari F."/>
            <person name="Rajaei M."/>
            <person name="Nasseri M."/>
            <person name="Haaf T."/>
            <person name="Azad A."/>
            <person name="Superti-Furga A."/>
            <person name="Maroofian R."/>
            <person name="Ghaderi-Sohi S."/>
            <person name="Najmabadi H."/>
            <person name="Abbaszadegan M.R."/>
            <person name="Vleminckx K."/>
            <person name="Nikuei P."/>
            <person name="Reversade B."/>
        </authorList>
    </citation>
    <scope>VARIANT PAPPAS 113-TYR--GLY-545 DEL</scope>
    <scope>CHARACTERIZATION OF VARIANT PAPPAS 113-TYR--GLY-545 DEL</scope>
    <scope>INVOLVEMENT IN PAPPAS</scope>
    <scope>FUNCTION</scope>
</reference>
<evidence type="ECO:0000250" key="1">
    <source>
        <dbReference type="UniProtKB" id="P70325"/>
    </source>
</evidence>
<evidence type="ECO:0000255" key="2">
    <source>
        <dbReference type="PROSITE-ProRule" id="PRU00201"/>
    </source>
</evidence>
<evidence type="ECO:0000256" key="3">
    <source>
        <dbReference type="SAM" id="MobiDB-lite"/>
    </source>
</evidence>
<evidence type="ECO:0000269" key="4">
    <source>
    </source>
</evidence>
<evidence type="ECO:0000269" key="5">
    <source>
    </source>
</evidence>
<evidence type="ECO:0000269" key="6">
    <source>
    </source>
</evidence>
<evidence type="ECO:0000269" key="7">
    <source>
    </source>
</evidence>
<evidence type="ECO:0000303" key="8">
    <source>
    </source>
</evidence>
<feature type="chain" id="PRO_0000184433" description="T-box transcription factor TBX4">
    <location>
        <begin position="1"/>
        <end position="545"/>
    </location>
</feature>
<feature type="DNA-binding region" description="T-box" evidence="2">
    <location>
        <begin position="71"/>
        <end position="251"/>
    </location>
</feature>
<feature type="region of interest" description="Disordered" evidence="3">
    <location>
        <begin position="479"/>
        <end position="509"/>
    </location>
</feature>
<feature type="compositionally biased region" description="Basic and acidic residues" evidence="3">
    <location>
        <begin position="482"/>
        <end position="505"/>
    </location>
</feature>
<feature type="modified residue" description="Phosphoserine" evidence="1">
    <location>
        <position position="507"/>
    </location>
</feature>
<feature type="splice variant" id="VSP_054002" description="In isoform 2." evidence="8">
    <original>R</original>
    <variation>RA</variation>
    <location>
        <position position="340"/>
    </location>
</feature>
<feature type="sequence variant" id="VAR_020251" description="In dbSNP:rs3744448." evidence="4 5">
    <original>G</original>
    <variation>A</variation>
    <location>
        <position position="6"/>
    </location>
</feature>
<feature type="sequence variant" id="VAR_026772" description="In dbSNP:rs148424252." evidence="4">
    <original>A</original>
    <variation>V</variation>
    <location>
        <position position="35"/>
    </location>
</feature>
<feature type="sequence variant" id="VAR_083526" description="In PAPPAS; also responsible for ischiocoxopodopatellar syndrome in heterozygous carriers; no detectable protein expression in homozygous patient cells." evidence="7">
    <location>
        <begin position="113"/>
        <end position="545"/>
    </location>
</feature>
<feature type="sequence variant" id="VAR_026745" description="In ICPPS; dbSNP:rs28938474." evidence="4">
    <original>G</original>
    <variation>V</variation>
    <location>
        <position position="248"/>
    </location>
</feature>
<feature type="sequence variant" id="VAR_078493" evidence="6">
    <original>P</original>
    <variation>T</variation>
    <location>
        <position position="282"/>
    </location>
</feature>
<feature type="sequence variant" id="VAR_021983" description="In dbSNP:rs3744438.">
    <original>A</original>
    <variation>V</variation>
    <location>
        <position position="314"/>
    </location>
</feature>
<feature type="sequence variant" id="VAR_026746" description="In ICPPS; dbSNP:rs28936696." evidence="4">
    <original>Q</original>
    <variation>R</variation>
    <location>
        <position position="531"/>
    </location>
</feature>
<protein>
    <recommendedName>
        <fullName>T-box transcription factor TBX4</fullName>
        <shortName>T-box protein 4</shortName>
    </recommendedName>
</protein>
<comment type="function">
    <text evidence="7">Transcriptional regulator that has an essential role in the organogenesis of lungs, pelvis, and hindlimbs.</text>
</comment>
<comment type="subcellular location">
    <subcellularLocation>
        <location evidence="2">Nucleus</location>
    </subcellularLocation>
</comment>
<comment type="alternative products">
    <event type="alternative splicing"/>
    <isoform>
        <id>P57082-1</id>
        <name>1</name>
        <sequence type="displayed"/>
    </isoform>
    <isoform>
        <id>P57082-2</id>
        <name>2</name>
        <sequence type="described" ref="VSP_054002"/>
    </isoform>
</comment>
<comment type="disease" evidence="4">
    <disease id="DI-02312">
        <name>Ischiocoxopodopatellar syndrome with or without pulmonary arterial hypertension</name>
        <acronym>ICPPS</acronym>
        <description>An autosomal dominant bone disease characterized by patellar aplasia or hypoplasia and by anomalies of the pelvis and feet, including disrupted ossification of the ischia and inferior pubic rami.</description>
        <dbReference type="MIM" id="147891"/>
    </disease>
    <text>The disease is caused by variants affecting the gene represented in this entry.</text>
</comment>
<comment type="disease" evidence="7">
    <disease id="DI-05747">
        <name>Amelia, posterior, with pelvic and pulmonary hypoplasia syndrome</name>
        <acronym>PAPPAS</acronym>
        <description>An autosomal recessive, lethal embryonic syndrome characterized by absent hindlimbs, pulmonary hypoplasia, severely hypoplastic or absent pelvic bones, hypoplasia of the sacrum, and ambiguous genitalia.</description>
        <dbReference type="MIM" id="601360"/>
    </disease>
    <text>The disease may be caused by variants affecting the gene represented in this entry.</text>
</comment>
<keyword id="KW-0025">Alternative splicing</keyword>
<keyword id="KW-0217">Developmental protein</keyword>
<keyword id="KW-0225">Disease variant</keyword>
<keyword id="KW-0238">DNA-binding</keyword>
<keyword id="KW-0539">Nucleus</keyword>
<keyword id="KW-0597">Phosphoprotein</keyword>
<keyword id="KW-1267">Proteomics identification</keyword>
<keyword id="KW-1185">Reference proteome</keyword>
<keyword id="KW-0804">Transcription</keyword>
<keyword id="KW-0805">Transcription regulation</keyword>
<organism>
    <name type="scientific">Homo sapiens</name>
    <name type="common">Human</name>
    <dbReference type="NCBI Taxonomy" id="9606"/>
    <lineage>
        <taxon>Eukaryota</taxon>
        <taxon>Metazoa</taxon>
        <taxon>Chordata</taxon>
        <taxon>Craniata</taxon>
        <taxon>Vertebrata</taxon>
        <taxon>Euteleostomi</taxon>
        <taxon>Mammalia</taxon>
        <taxon>Eutheria</taxon>
        <taxon>Euarchontoglires</taxon>
        <taxon>Primates</taxon>
        <taxon>Haplorrhini</taxon>
        <taxon>Catarrhini</taxon>
        <taxon>Hominidae</taxon>
        <taxon>Homo</taxon>
    </lineage>
</organism>
<accession>P57082</accession>
<accession>A5PKU7</accession>
<accession>B2RMT1</accession>
<accession>B7ZLV3</accession>
<proteinExistence type="evidence at protein level"/>
<name>TBX4_HUMAN</name>
<sequence>MLQDKGLSESEEAFRAPGPALGEASAANAPEPALAAPGLSGAALGSPPGPGADVVAAAAAEQTIENIKVGLHEKELWKKFHEAGTEMIITKAGRRMFPSYKVKVTGMNPKTKYILLIDIVPADDHRYKFCDNKWMVAGKAEPAMPGRLYVHPDSPATGAHWMRQLVSFQKLKLTNNHLDPFGHIILNSMHKYQPRLHIVKADENNAFGSKNTAFCTHVFPETSFISVTSYQNHKITQLKIENNPFAKGFRGSDDSDLRVARLQSKEYPVISKSIMRQRLISPQLSATPDVGPLLGTHQALQHYQHENGAHSQLAEPQDLPLSTFPTQRDSSLFYHCLKRRDGTRHLDLPCKRSYLEAPSSVGEDHYFRSPPPYDQQMLSPSYCSEVTPREACMYSGSGPEIAGVSGVDDLPPPPLSCNMWTSVSPYTSYSVQTMETVPYQPFPTHFTATTMMPRLPTLSAQSSQPPGNAHFSVYNQLSQSQVRERGPSASFPRERGLPQGCERKPPSPHLNAANEFLYSQTFSLSRESSLQYHSGMGTVENWTDG</sequence>
<dbReference type="EMBL" id="AF188703">
    <property type="protein sequence ID" value="AAF68854.1"/>
    <property type="molecule type" value="mRNA"/>
</dbReference>
<dbReference type="EMBL" id="AC005901">
    <property type="status" value="NOT_ANNOTATED_CDS"/>
    <property type="molecule type" value="Genomic_DNA"/>
</dbReference>
<dbReference type="EMBL" id="BC136403">
    <property type="protein sequence ID" value="AAI36404.1"/>
    <property type="molecule type" value="mRNA"/>
</dbReference>
<dbReference type="EMBL" id="BC142620">
    <property type="protein sequence ID" value="AAI42621.1"/>
    <property type="molecule type" value="mRNA"/>
</dbReference>
<dbReference type="EMBL" id="BC144062">
    <property type="protein sequence ID" value="AAI44063.1"/>
    <property type="molecule type" value="mRNA"/>
</dbReference>
<dbReference type="CCDS" id="CCDS11629.1">
    <molecule id="P57082-1"/>
</dbReference>
<dbReference type="CCDS" id="CCDS82180.1">
    <molecule id="P57082-2"/>
</dbReference>
<dbReference type="RefSeq" id="NP_001308049.1">
    <molecule id="P57082-2"/>
    <property type="nucleotide sequence ID" value="NM_001321120.2"/>
</dbReference>
<dbReference type="RefSeq" id="NP_060958.2">
    <molecule id="P57082-1"/>
    <property type="nucleotide sequence ID" value="NM_018488.3"/>
</dbReference>
<dbReference type="SMR" id="P57082"/>
<dbReference type="BioGRID" id="114875">
    <property type="interactions" value="5"/>
</dbReference>
<dbReference type="FunCoup" id="P57082">
    <property type="interactions" value="239"/>
</dbReference>
<dbReference type="IntAct" id="P57082">
    <property type="interactions" value="3"/>
</dbReference>
<dbReference type="MINT" id="P57082"/>
<dbReference type="STRING" id="9606.ENSP00000495986"/>
<dbReference type="iPTMnet" id="P57082"/>
<dbReference type="PhosphoSitePlus" id="P57082"/>
<dbReference type="BioMuta" id="TBX4"/>
<dbReference type="DMDM" id="51338786"/>
<dbReference type="MassIVE" id="P57082"/>
<dbReference type="PaxDb" id="9606-ENSP00000240335"/>
<dbReference type="PeptideAtlas" id="P57082"/>
<dbReference type="ProteomicsDB" id="56994">
    <molecule id="P57082-1"/>
</dbReference>
<dbReference type="ProteomicsDB" id="721"/>
<dbReference type="ABCD" id="P57082">
    <property type="antibodies" value="5 sequenced antibodies"/>
</dbReference>
<dbReference type="Antibodypedia" id="18589">
    <property type="antibodies" value="152 antibodies from 25 providers"/>
</dbReference>
<dbReference type="DNASU" id="9496"/>
<dbReference type="Ensembl" id="ENST00000240335.1">
    <molecule id="P57082-1"/>
    <property type="protein sequence ID" value="ENSP00000240335.1"/>
    <property type="gene ID" value="ENSG00000121075.11"/>
</dbReference>
<dbReference type="Ensembl" id="ENST00000642491.1">
    <molecule id="P57082-2"/>
    <property type="protein sequence ID" value="ENSP00000495714.1"/>
    <property type="gene ID" value="ENSG00000121075.11"/>
</dbReference>
<dbReference type="Ensembl" id="ENST00000644296.1">
    <molecule id="P57082-2"/>
    <property type="protein sequence ID" value="ENSP00000495986.1"/>
    <property type="gene ID" value="ENSG00000121075.11"/>
</dbReference>
<dbReference type="GeneID" id="9496"/>
<dbReference type="KEGG" id="hsa:9496"/>
<dbReference type="MANE-Select" id="ENST00000644296.1">
    <molecule id="P57082-2"/>
    <property type="protein sequence ID" value="ENSP00000495986.1"/>
    <property type="RefSeq nucleotide sequence ID" value="NM_001321120.2"/>
    <property type="RefSeq protein sequence ID" value="NP_001308049.1"/>
</dbReference>
<dbReference type="UCSC" id="uc002izi.3">
    <molecule id="P57082-1"/>
    <property type="organism name" value="human"/>
</dbReference>
<dbReference type="AGR" id="HGNC:11603"/>
<dbReference type="CTD" id="9496"/>
<dbReference type="DisGeNET" id="9496"/>
<dbReference type="GeneCards" id="TBX4"/>
<dbReference type="HGNC" id="HGNC:11603">
    <property type="gene designation" value="TBX4"/>
</dbReference>
<dbReference type="HPA" id="ENSG00000121075">
    <property type="expression patterns" value="Tissue enhanced (lung, placenta, prostate)"/>
</dbReference>
<dbReference type="MalaCards" id="TBX4"/>
<dbReference type="MIM" id="147891">
    <property type="type" value="phenotype"/>
</dbReference>
<dbReference type="MIM" id="601360">
    <property type="type" value="phenotype"/>
</dbReference>
<dbReference type="MIM" id="601719">
    <property type="type" value="gene"/>
</dbReference>
<dbReference type="neXtProt" id="NX_P57082"/>
<dbReference type="OpenTargets" id="ENSG00000121075"/>
<dbReference type="Orphanet" id="261279">
    <property type="disease" value="17q23.1q23.2 microdeletion syndrome"/>
</dbReference>
<dbReference type="Orphanet" id="1509">
    <property type="disease" value="Coxopodopatellar syndrome"/>
</dbReference>
<dbReference type="Orphanet" id="238578">
    <property type="disease" value="Familial clubfoot due to 17q23.1q23.2 microduplication"/>
</dbReference>
<dbReference type="Orphanet" id="275777">
    <property type="disease" value="Heritable pulmonary arterial hypertension"/>
</dbReference>
<dbReference type="Orphanet" id="3301">
    <property type="disease" value="Tetraamelia-multiple malformations syndrome"/>
</dbReference>
<dbReference type="PharmGKB" id="PA36366"/>
<dbReference type="VEuPathDB" id="HostDB:ENSG00000121075"/>
<dbReference type="eggNOG" id="KOG3585">
    <property type="taxonomic scope" value="Eukaryota"/>
</dbReference>
<dbReference type="GeneTree" id="ENSGT00940000158882"/>
<dbReference type="HOGENOM" id="CLU_037025_1_0_1"/>
<dbReference type="InParanoid" id="P57082"/>
<dbReference type="OMA" id="VCERKAP"/>
<dbReference type="OrthoDB" id="7442607at2759"/>
<dbReference type="PAN-GO" id="P57082">
    <property type="GO annotations" value="5 GO annotations based on evolutionary models"/>
</dbReference>
<dbReference type="PhylomeDB" id="P57082"/>
<dbReference type="TreeFam" id="TF106341"/>
<dbReference type="PathwayCommons" id="P57082"/>
<dbReference type="SignaLink" id="P57082"/>
<dbReference type="BioGRID-ORCS" id="9496">
    <property type="hits" value="16 hits in 1170 CRISPR screens"/>
</dbReference>
<dbReference type="ChiTaRS" id="TBX4">
    <property type="organism name" value="human"/>
</dbReference>
<dbReference type="GenomeRNAi" id="9496"/>
<dbReference type="Pharos" id="P57082">
    <property type="development level" value="Tbio"/>
</dbReference>
<dbReference type="PRO" id="PR:P57082"/>
<dbReference type="Proteomes" id="UP000005640">
    <property type="component" value="Chromosome 17"/>
</dbReference>
<dbReference type="RNAct" id="P57082">
    <property type="molecule type" value="protein"/>
</dbReference>
<dbReference type="Bgee" id="ENSG00000121075">
    <property type="expression patterns" value="Expressed in right lung and 87 other cell types or tissues"/>
</dbReference>
<dbReference type="ExpressionAtlas" id="P57082">
    <property type="expression patterns" value="baseline and differential"/>
</dbReference>
<dbReference type="GO" id="GO:0000785">
    <property type="term" value="C:chromatin"/>
    <property type="evidence" value="ECO:0000247"/>
    <property type="project" value="NTNU_SB"/>
</dbReference>
<dbReference type="GO" id="GO:0005634">
    <property type="term" value="C:nucleus"/>
    <property type="evidence" value="ECO:0000318"/>
    <property type="project" value="GO_Central"/>
</dbReference>
<dbReference type="GO" id="GO:0003677">
    <property type="term" value="F:DNA binding"/>
    <property type="evidence" value="ECO:0000303"/>
    <property type="project" value="UniProtKB"/>
</dbReference>
<dbReference type="GO" id="GO:0000981">
    <property type="term" value="F:DNA-binding transcription factor activity, RNA polymerase II-specific"/>
    <property type="evidence" value="ECO:0000247"/>
    <property type="project" value="NTNU_SB"/>
</dbReference>
<dbReference type="GO" id="GO:0000978">
    <property type="term" value="F:RNA polymerase II cis-regulatory region sequence-specific DNA binding"/>
    <property type="evidence" value="ECO:0000318"/>
    <property type="project" value="GO_Central"/>
</dbReference>
<dbReference type="GO" id="GO:0001525">
    <property type="term" value="P:angiogenesis"/>
    <property type="evidence" value="ECO:0000318"/>
    <property type="project" value="GO_Central"/>
</dbReference>
<dbReference type="GO" id="GO:0001708">
    <property type="term" value="P:cell fate specification"/>
    <property type="evidence" value="ECO:0000318"/>
    <property type="project" value="GO_Central"/>
</dbReference>
<dbReference type="GO" id="GO:0035116">
    <property type="term" value="P:embryonic hindlimb morphogenesis"/>
    <property type="evidence" value="ECO:0000315"/>
    <property type="project" value="UniProtKB"/>
</dbReference>
<dbReference type="GO" id="GO:1990401">
    <property type="term" value="P:embryonic lung development"/>
    <property type="evidence" value="ECO:0000315"/>
    <property type="project" value="UniProtKB"/>
</dbReference>
<dbReference type="GO" id="GO:0035108">
    <property type="term" value="P:limb morphogenesis"/>
    <property type="evidence" value="ECO:0000315"/>
    <property type="project" value="UniProtKB"/>
</dbReference>
<dbReference type="GO" id="GO:0030324">
    <property type="term" value="P:lung development"/>
    <property type="evidence" value="ECO:0007669"/>
    <property type="project" value="Ensembl"/>
</dbReference>
<dbReference type="GO" id="GO:0002009">
    <property type="term" value="P:morphogenesis of an epithelium"/>
    <property type="evidence" value="ECO:0007669"/>
    <property type="project" value="Ensembl"/>
</dbReference>
<dbReference type="GO" id="GO:0045893">
    <property type="term" value="P:positive regulation of DNA-templated transcription"/>
    <property type="evidence" value="ECO:0007669"/>
    <property type="project" value="InterPro"/>
</dbReference>
<dbReference type="GO" id="GO:0006357">
    <property type="term" value="P:regulation of transcription by RNA polymerase II"/>
    <property type="evidence" value="ECO:0000318"/>
    <property type="project" value="GO_Central"/>
</dbReference>
<dbReference type="GO" id="GO:0048705">
    <property type="term" value="P:skeletal system morphogenesis"/>
    <property type="evidence" value="ECO:0000315"/>
    <property type="project" value="UniProtKB"/>
</dbReference>
<dbReference type="CDD" id="cd20189">
    <property type="entry name" value="T-box_TBX4_5-like"/>
    <property type="match status" value="1"/>
</dbReference>
<dbReference type="FunFam" id="2.60.40.820:FF:000005">
    <property type="entry name" value="T-box transcription factor TBX5"/>
    <property type="match status" value="1"/>
</dbReference>
<dbReference type="Gene3D" id="2.60.40.820">
    <property type="entry name" value="Transcription factor, T-box"/>
    <property type="match status" value="1"/>
</dbReference>
<dbReference type="InterPro" id="IPR008967">
    <property type="entry name" value="p53-like_TF_DNA-bd_sf"/>
</dbReference>
<dbReference type="InterPro" id="IPR046360">
    <property type="entry name" value="T-box_DNA-bd"/>
</dbReference>
<dbReference type="InterPro" id="IPR036960">
    <property type="entry name" value="T-box_sf"/>
</dbReference>
<dbReference type="InterPro" id="IPR001699">
    <property type="entry name" value="TF_T-box"/>
</dbReference>
<dbReference type="InterPro" id="IPR018186">
    <property type="entry name" value="TF_T-box_CS"/>
</dbReference>
<dbReference type="PANTHER" id="PTHR11267">
    <property type="entry name" value="T-BOX PROTEIN-RELATED"/>
    <property type="match status" value="1"/>
</dbReference>
<dbReference type="PANTHER" id="PTHR11267:SF29">
    <property type="entry name" value="T-BOX TRANSCRIPTION FACTOR TBX4"/>
    <property type="match status" value="1"/>
</dbReference>
<dbReference type="Pfam" id="PF00907">
    <property type="entry name" value="T-box"/>
    <property type="match status" value="1"/>
</dbReference>
<dbReference type="PRINTS" id="PR00937">
    <property type="entry name" value="TBOX"/>
</dbReference>
<dbReference type="SMART" id="SM00425">
    <property type="entry name" value="TBOX"/>
    <property type="match status" value="1"/>
</dbReference>
<dbReference type="SUPFAM" id="SSF49417">
    <property type="entry name" value="p53-like transcription factors"/>
    <property type="match status" value="1"/>
</dbReference>
<dbReference type="PROSITE" id="PS01283">
    <property type="entry name" value="TBOX_1"/>
    <property type="match status" value="1"/>
</dbReference>
<dbReference type="PROSITE" id="PS01264">
    <property type="entry name" value="TBOX_2"/>
    <property type="match status" value="1"/>
</dbReference>
<dbReference type="PROSITE" id="PS50252">
    <property type="entry name" value="TBOX_3"/>
    <property type="match status" value="1"/>
</dbReference>